<accession>B2K437</accession>
<feature type="chain" id="PRO_1000146730" description="p-hydroxybenzoic acid efflux pump subunit AaeA">
    <location>
        <begin position="1"/>
        <end position="311"/>
    </location>
</feature>
<feature type="transmembrane region" description="Helical" evidence="1">
    <location>
        <begin position="11"/>
        <end position="31"/>
    </location>
</feature>
<evidence type="ECO:0000255" key="1">
    <source>
        <dbReference type="HAMAP-Rule" id="MF_01544"/>
    </source>
</evidence>
<gene>
    <name evidence="1" type="primary">aaeA</name>
    <name type="ordered locus">YPTS_3733</name>
</gene>
<organism>
    <name type="scientific">Yersinia pseudotuberculosis serotype IB (strain PB1/+)</name>
    <dbReference type="NCBI Taxonomy" id="502801"/>
    <lineage>
        <taxon>Bacteria</taxon>
        <taxon>Pseudomonadati</taxon>
        <taxon>Pseudomonadota</taxon>
        <taxon>Gammaproteobacteria</taxon>
        <taxon>Enterobacterales</taxon>
        <taxon>Yersiniaceae</taxon>
        <taxon>Yersinia</taxon>
    </lineage>
</organism>
<name>AAEA_YERPB</name>
<reference key="1">
    <citation type="submission" date="2008-04" db="EMBL/GenBank/DDBJ databases">
        <title>Complete sequence of Yersinia pseudotuberculosis PB1/+.</title>
        <authorList>
            <person name="Copeland A."/>
            <person name="Lucas S."/>
            <person name="Lapidus A."/>
            <person name="Glavina del Rio T."/>
            <person name="Dalin E."/>
            <person name="Tice H."/>
            <person name="Bruce D."/>
            <person name="Goodwin L."/>
            <person name="Pitluck S."/>
            <person name="Munk A.C."/>
            <person name="Brettin T."/>
            <person name="Detter J.C."/>
            <person name="Han C."/>
            <person name="Tapia R."/>
            <person name="Schmutz J."/>
            <person name="Larimer F."/>
            <person name="Land M."/>
            <person name="Hauser L."/>
            <person name="Challacombe J.F."/>
            <person name="Green L."/>
            <person name="Lindler L.E."/>
            <person name="Nikolich M.P."/>
            <person name="Richardson P."/>
        </authorList>
    </citation>
    <scope>NUCLEOTIDE SEQUENCE [LARGE SCALE GENOMIC DNA]</scope>
    <source>
        <strain>PB1/+</strain>
    </source>
</reference>
<protein>
    <recommendedName>
        <fullName evidence="1">p-hydroxybenzoic acid efflux pump subunit AaeA</fullName>
        <shortName evidence="1">pHBA efflux pump protein A</shortName>
    </recommendedName>
</protein>
<keyword id="KW-0997">Cell inner membrane</keyword>
<keyword id="KW-1003">Cell membrane</keyword>
<keyword id="KW-0472">Membrane</keyword>
<keyword id="KW-0812">Transmembrane</keyword>
<keyword id="KW-1133">Transmembrane helix</keyword>
<keyword id="KW-0813">Transport</keyword>
<dbReference type="EMBL" id="CP001048">
    <property type="protein sequence ID" value="ACC90686.1"/>
    <property type="molecule type" value="Genomic_DNA"/>
</dbReference>
<dbReference type="RefSeq" id="WP_002210094.1">
    <property type="nucleotide sequence ID" value="NZ_CP009780.1"/>
</dbReference>
<dbReference type="SMR" id="B2K437"/>
<dbReference type="GeneID" id="57975110"/>
<dbReference type="KEGG" id="ypb:YPTS_3733"/>
<dbReference type="PATRIC" id="fig|502801.10.peg.3191"/>
<dbReference type="GO" id="GO:0005886">
    <property type="term" value="C:plasma membrane"/>
    <property type="evidence" value="ECO:0007669"/>
    <property type="project" value="UniProtKB-SubCell"/>
</dbReference>
<dbReference type="GO" id="GO:0022857">
    <property type="term" value="F:transmembrane transporter activity"/>
    <property type="evidence" value="ECO:0007669"/>
    <property type="project" value="UniProtKB-UniRule"/>
</dbReference>
<dbReference type="Gene3D" id="2.40.30.170">
    <property type="match status" value="1"/>
</dbReference>
<dbReference type="Gene3D" id="2.40.50.100">
    <property type="match status" value="1"/>
</dbReference>
<dbReference type="HAMAP" id="MF_01544">
    <property type="entry name" value="AaeA"/>
    <property type="match status" value="1"/>
</dbReference>
<dbReference type="InterPro" id="IPR043602">
    <property type="entry name" value="CusB-like_dom_1"/>
</dbReference>
<dbReference type="InterPro" id="IPR032317">
    <property type="entry name" value="CusB_D23"/>
</dbReference>
<dbReference type="InterPro" id="IPR050393">
    <property type="entry name" value="MFP_Efflux_Pump"/>
</dbReference>
<dbReference type="InterPro" id="IPR022871">
    <property type="entry name" value="PHBA_efflux_pump_AaeA"/>
</dbReference>
<dbReference type="InterPro" id="IPR006143">
    <property type="entry name" value="RND_pump_MFP"/>
</dbReference>
<dbReference type="NCBIfam" id="NF007850">
    <property type="entry name" value="PRK10559.1"/>
    <property type="match status" value="1"/>
</dbReference>
<dbReference type="NCBIfam" id="TIGR01730">
    <property type="entry name" value="RND_mfp"/>
    <property type="match status" value="1"/>
</dbReference>
<dbReference type="PANTHER" id="PTHR30367:SF12">
    <property type="entry name" value="P-HYDROXYBENZOIC ACID EFFLUX PUMP SUBUNIT AAEA"/>
    <property type="match status" value="1"/>
</dbReference>
<dbReference type="PANTHER" id="PTHR30367">
    <property type="entry name" value="P-HYDROXYBENZOIC ACID EFFLUX PUMP SUBUNIT AAEA-RELATED"/>
    <property type="match status" value="1"/>
</dbReference>
<dbReference type="Pfam" id="PF00529">
    <property type="entry name" value="CusB_dom_1"/>
    <property type="match status" value="1"/>
</dbReference>
<dbReference type="Pfam" id="PF16576">
    <property type="entry name" value="HlyD_D23"/>
    <property type="match status" value="1"/>
</dbReference>
<dbReference type="SUPFAM" id="SSF111369">
    <property type="entry name" value="HlyD-like secretion proteins"/>
    <property type="match status" value="1"/>
</dbReference>
<sequence>MSTFSLKIIRVGITVLVVVLAVIAIFNVWAFYTESPWTRDAKFTADVVAIAPDVSGLLTEVPVKDNQLVQKGQILFVIDQPRYQQALAEAEADVAYYQTLAAEKQRESSRRHRLGIQALSQEEIDQASNVLQTVQHQLAKAIAVRDLARLDLERTTVRAPAEGWVTNLNVHAGEFINRGATAVALVKKDTFYILAYLEETKLEGVKPGYRAEITPLGSNRILHGTVDSISAGVTNSSSSADSKGLATIDNNLEWVRLAQRVPVKIHLDSEDQQYLYPAGTTATVVITGPNDRDPHQASPMTKLMHRLREFG</sequence>
<proteinExistence type="inferred from homology"/>
<comment type="function">
    <text evidence="1">Forms an efflux pump with AaeB.</text>
</comment>
<comment type="subcellular location">
    <subcellularLocation>
        <location evidence="1">Cell inner membrane</location>
        <topology evidence="1">Single-pass membrane protein</topology>
    </subcellularLocation>
</comment>
<comment type="similarity">
    <text evidence="1">Belongs to the membrane fusion protein (MFP) (TC 8.A.1) family.</text>
</comment>